<keyword id="KW-0028">Amino-acid biosynthesis</keyword>
<keyword id="KW-0963">Cytoplasm</keyword>
<keyword id="KW-0220">Diaminopimelate biosynthesis</keyword>
<keyword id="KW-0456">Lyase</keyword>
<keyword id="KW-0457">Lysine biosynthesis</keyword>
<keyword id="KW-0704">Schiff base</keyword>
<name>DAPA_STAA9</name>
<comment type="function">
    <text evidence="1">Catalyzes the condensation of (S)-aspartate-beta-semialdehyde [(S)-ASA] and pyruvate to 4-hydroxy-tetrahydrodipicolinate (HTPA).</text>
</comment>
<comment type="catalytic activity">
    <reaction evidence="1">
        <text>L-aspartate 4-semialdehyde + pyruvate = (2S,4S)-4-hydroxy-2,3,4,5-tetrahydrodipicolinate + H2O + H(+)</text>
        <dbReference type="Rhea" id="RHEA:34171"/>
        <dbReference type="ChEBI" id="CHEBI:15361"/>
        <dbReference type="ChEBI" id="CHEBI:15377"/>
        <dbReference type="ChEBI" id="CHEBI:15378"/>
        <dbReference type="ChEBI" id="CHEBI:67139"/>
        <dbReference type="ChEBI" id="CHEBI:537519"/>
        <dbReference type="EC" id="4.3.3.7"/>
    </reaction>
</comment>
<comment type="pathway">
    <text evidence="1">Amino-acid biosynthesis; L-lysine biosynthesis via DAP pathway; (S)-tetrahydrodipicolinate from L-aspartate: step 3/4.</text>
</comment>
<comment type="subunit">
    <text evidence="1">Homodimer.</text>
</comment>
<comment type="subcellular location">
    <subcellularLocation>
        <location evidence="1">Cytoplasm</location>
    </subcellularLocation>
</comment>
<comment type="similarity">
    <text evidence="1">Belongs to the DapA family.</text>
</comment>
<comment type="caution">
    <text evidence="2">Was originally thought to be a dihydrodipicolinate synthase (DHDPS), catalyzing the condensation of (S)-aspartate-beta-semialdehyde [(S)-ASA] and pyruvate to dihydrodipicolinate (DHDP). However, it was shown in E.coli that the product of the enzymatic reaction is not dihydrodipicolinate but in fact (4S)-4-hydroxy-2,3,4,5-tetrahydro-(2S)-dipicolinic acid (HTPA), and that the consecutive dehydration reaction leading to DHDP is not spontaneous but catalyzed by DapB.</text>
</comment>
<gene>
    <name evidence="1" type="primary">dapA</name>
    <name type="ordered locus">SaurJH9_1456</name>
</gene>
<dbReference type="EC" id="4.3.3.7" evidence="1"/>
<dbReference type="EMBL" id="CP000703">
    <property type="protein sequence ID" value="ABQ49250.1"/>
    <property type="molecule type" value="Genomic_DNA"/>
</dbReference>
<dbReference type="RefSeq" id="WP_000149278.1">
    <property type="nucleotide sequence ID" value="NC_009487.1"/>
</dbReference>
<dbReference type="SMR" id="A5ISS7"/>
<dbReference type="KEGG" id="saj:SaurJH9_1456"/>
<dbReference type="HOGENOM" id="CLU_049343_7_0_9"/>
<dbReference type="UniPathway" id="UPA00034">
    <property type="reaction ID" value="UER00017"/>
</dbReference>
<dbReference type="GO" id="GO:0005829">
    <property type="term" value="C:cytosol"/>
    <property type="evidence" value="ECO:0007669"/>
    <property type="project" value="TreeGrafter"/>
</dbReference>
<dbReference type="GO" id="GO:0008840">
    <property type="term" value="F:4-hydroxy-tetrahydrodipicolinate synthase activity"/>
    <property type="evidence" value="ECO:0007669"/>
    <property type="project" value="UniProtKB-UniRule"/>
</dbReference>
<dbReference type="GO" id="GO:0019877">
    <property type="term" value="P:diaminopimelate biosynthetic process"/>
    <property type="evidence" value="ECO:0007669"/>
    <property type="project" value="UniProtKB-UniRule"/>
</dbReference>
<dbReference type="GO" id="GO:0009089">
    <property type="term" value="P:lysine biosynthetic process via diaminopimelate"/>
    <property type="evidence" value="ECO:0007669"/>
    <property type="project" value="UniProtKB-UniRule"/>
</dbReference>
<dbReference type="CDD" id="cd00950">
    <property type="entry name" value="DHDPS"/>
    <property type="match status" value="1"/>
</dbReference>
<dbReference type="Gene3D" id="3.20.20.70">
    <property type="entry name" value="Aldolase class I"/>
    <property type="match status" value="1"/>
</dbReference>
<dbReference type="HAMAP" id="MF_00418">
    <property type="entry name" value="DapA"/>
    <property type="match status" value="1"/>
</dbReference>
<dbReference type="InterPro" id="IPR013785">
    <property type="entry name" value="Aldolase_TIM"/>
</dbReference>
<dbReference type="InterPro" id="IPR005263">
    <property type="entry name" value="DapA"/>
</dbReference>
<dbReference type="InterPro" id="IPR002220">
    <property type="entry name" value="DapA-like"/>
</dbReference>
<dbReference type="InterPro" id="IPR020625">
    <property type="entry name" value="Schiff_base-form_aldolases_AS"/>
</dbReference>
<dbReference type="NCBIfam" id="TIGR00674">
    <property type="entry name" value="dapA"/>
    <property type="match status" value="1"/>
</dbReference>
<dbReference type="PANTHER" id="PTHR12128:SF66">
    <property type="entry name" value="4-HYDROXY-2-OXOGLUTARATE ALDOLASE, MITOCHONDRIAL"/>
    <property type="match status" value="1"/>
</dbReference>
<dbReference type="PANTHER" id="PTHR12128">
    <property type="entry name" value="DIHYDRODIPICOLINATE SYNTHASE"/>
    <property type="match status" value="1"/>
</dbReference>
<dbReference type="Pfam" id="PF00701">
    <property type="entry name" value="DHDPS"/>
    <property type="match status" value="1"/>
</dbReference>
<dbReference type="PIRSF" id="PIRSF001365">
    <property type="entry name" value="DHDPS"/>
    <property type="match status" value="1"/>
</dbReference>
<dbReference type="PRINTS" id="PR00146">
    <property type="entry name" value="DHPICSNTHASE"/>
</dbReference>
<dbReference type="SMART" id="SM01130">
    <property type="entry name" value="DHDPS"/>
    <property type="match status" value="1"/>
</dbReference>
<dbReference type="SUPFAM" id="SSF51569">
    <property type="entry name" value="Aldolase"/>
    <property type="match status" value="1"/>
</dbReference>
<dbReference type="PROSITE" id="PS00666">
    <property type="entry name" value="DHDPS_2"/>
    <property type="match status" value="1"/>
</dbReference>
<protein>
    <recommendedName>
        <fullName evidence="1">4-hydroxy-tetrahydrodipicolinate synthase</fullName>
        <shortName evidence="1">HTPA synthase</shortName>
        <ecNumber evidence="1">4.3.3.7</ecNumber>
    </recommendedName>
</protein>
<organism>
    <name type="scientific">Staphylococcus aureus (strain JH9)</name>
    <dbReference type="NCBI Taxonomy" id="359786"/>
    <lineage>
        <taxon>Bacteria</taxon>
        <taxon>Bacillati</taxon>
        <taxon>Bacillota</taxon>
        <taxon>Bacilli</taxon>
        <taxon>Bacillales</taxon>
        <taxon>Staphylococcaceae</taxon>
        <taxon>Staphylococcus</taxon>
    </lineage>
</organism>
<accession>A5ISS7</accession>
<evidence type="ECO:0000255" key="1">
    <source>
        <dbReference type="HAMAP-Rule" id="MF_00418"/>
    </source>
</evidence>
<evidence type="ECO:0000305" key="2"/>
<sequence>MTHLFEGVGVALTTPFTNNKVNLEALKAHVNFLLENNAQAIIVNGTTAESPTLTTDEKERILKTVIDLVDKRVPVIAGTGTNDTEKSIQASFQAKALGADAIMLITPYYNKTNQRGLVKHFEAITDAVKLPVVLYNVPSRTNMTIEPETVEILSQHPYIVALKDATNDFEYLEEVKKRIDTNSFALYSGNDDNVVEYYQRGGQGVISVIANVIPKEFQALYDAQQSGLDIQDQFKPIGTLLSALSVDINPIPIKALTSYLEFGNYELRLPLVSLEDTDTKVLREAYDTFKAGENE</sequence>
<reference key="1">
    <citation type="submission" date="2007-05" db="EMBL/GenBank/DDBJ databases">
        <title>Complete sequence of chromosome of Staphylococcus aureus subsp. aureus JH9.</title>
        <authorList>
            <consortium name="US DOE Joint Genome Institute"/>
            <person name="Copeland A."/>
            <person name="Lucas S."/>
            <person name="Lapidus A."/>
            <person name="Barry K."/>
            <person name="Detter J.C."/>
            <person name="Glavina del Rio T."/>
            <person name="Hammon N."/>
            <person name="Israni S."/>
            <person name="Pitluck S."/>
            <person name="Chain P."/>
            <person name="Malfatti S."/>
            <person name="Shin M."/>
            <person name="Vergez L."/>
            <person name="Schmutz J."/>
            <person name="Larimer F."/>
            <person name="Land M."/>
            <person name="Hauser L."/>
            <person name="Kyrpides N."/>
            <person name="Kim E."/>
            <person name="Tomasz A."/>
            <person name="Richardson P."/>
        </authorList>
    </citation>
    <scope>NUCLEOTIDE SEQUENCE [LARGE SCALE GENOMIC DNA]</scope>
    <source>
        <strain>JH9</strain>
    </source>
</reference>
<feature type="chain" id="PRO_1000080542" description="4-hydroxy-tetrahydrodipicolinate synthase">
    <location>
        <begin position="1"/>
        <end position="295"/>
    </location>
</feature>
<feature type="active site" description="Proton donor/acceptor" evidence="1">
    <location>
        <position position="135"/>
    </location>
</feature>
<feature type="active site" description="Schiff-base intermediate with substrate" evidence="1">
    <location>
        <position position="163"/>
    </location>
</feature>
<feature type="binding site" evidence="1">
    <location>
        <position position="47"/>
    </location>
    <ligand>
        <name>pyruvate</name>
        <dbReference type="ChEBI" id="CHEBI:15361"/>
    </ligand>
</feature>
<feature type="binding site" evidence="1">
    <location>
        <position position="206"/>
    </location>
    <ligand>
        <name>pyruvate</name>
        <dbReference type="ChEBI" id="CHEBI:15361"/>
    </ligand>
</feature>
<feature type="site" description="Part of a proton relay during catalysis" evidence="1">
    <location>
        <position position="46"/>
    </location>
</feature>
<feature type="site" description="Part of a proton relay during catalysis" evidence="1">
    <location>
        <position position="109"/>
    </location>
</feature>
<proteinExistence type="inferred from homology"/>